<name>CYC21_RHOTP</name>
<protein>
    <recommendedName>
        <fullName evidence="1">Cytochrome c2</fullName>
    </recommendedName>
</protein>
<reference key="1">
    <citation type="journal article" date="2010" name="Arch. Microbiol.">
        <title>Evidence from the structure and function of cytochromes c(2) that nonsulfur purple bacterial photosynthesis followed the evolution of oxygen respiration.</title>
        <authorList>
            <person name="Meyer T."/>
            <person name="Van Driessche G."/>
            <person name="Ambler R."/>
            <person name="Kyndt J."/>
            <person name="Devreese B."/>
            <person name="Van Beeumen J."/>
            <person name="Cusanovich M."/>
        </authorList>
    </citation>
    <scope>PROTEIN SEQUENCE</scope>
    <scope>SUBCELLULAR LOCATION</scope>
</reference>
<proteinExistence type="evidence at protein level"/>
<dbReference type="SMR" id="P86322"/>
<dbReference type="GO" id="GO:0042597">
    <property type="term" value="C:periplasmic space"/>
    <property type="evidence" value="ECO:0007669"/>
    <property type="project" value="UniProtKB-SubCell"/>
</dbReference>
<dbReference type="GO" id="GO:0009055">
    <property type="term" value="F:electron transfer activity"/>
    <property type="evidence" value="ECO:0007669"/>
    <property type="project" value="InterPro"/>
</dbReference>
<dbReference type="GO" id="GO:0020037">
    <property type="term" value="F:heme binding"/>
    <property type="evidence" value="ECO:0007669"/>
    <property type="project" value="InterPro"/>
</dbReference>
<dbReference type="GO" id="GO:0046872">
    <property type="term" value="F:metal ion binding"/>
    <property type="evidence" value="ECO:0007669"/>
    <property type="project" value="UniProtKB-KW"/>
</dbReference>
<dbReference type="GO" id="GO:0015979">
    <property type="term" value="P:photosynthesis"/>
    <property type="evidence" value="ECO:0007669"/>
    <property type="project" value="UniProtKB-KW"/>
</dbReference>
<dbReference type="FunFam" id="1.10.760.10:FF:000001">
    <property type="entry name" value="Cytochrome c iso-1"/>
    <property type="match status" value="1"/>
</dbReference>
<dbReference type="Gene3D" id="1.10.760.10">
    <property type="entry name" value="Cytochrome c-like domain"/>
    <property type="match status" value="1"/>
</dbReference>
<dbReference type="InterPro" id="IPR009056">
    <property type="entry name" value="Cyt_c-like_dom"/>
</dbReference>
<dbReference type="InterPro" id="IPR036909">
    <property type="entry name" value="Cyt_c-like_dom_sf"/>
</dbReference>
<dbReference type="InterPro" id="IPR002327">
    <property type="entry name" value="Cyt_c_1A/1B"/>
</dbReference>
<dbReference type="PANTHER" id="PTHR11961">
    <property type="entry name" value="CYTOCHROME C"/>
    <property type="match status" value="1"/>
</dbReference>
<dbReference type="Pfam" id="PF00034">
    <property type="entry name" value="Cytochrom_C"/>
    <property type="match status" value="1"/>
</dbReference>
<dbReference type="PRINTS" id="PR00604">
    <property type="entry name" value="CYTCHRMECIAB"/>
</dbReference>
<dbReference type="SUPFAM" id="SSF46626">
    <property type="entry name" value="Cytochrome c"/>
    <property type="match status" value="1"/>
</dbReference>
<dbReference type="PROSITE" id="PS51007">
    <property type="entry name" value="CYTC"/>
    <property type="match status" value="1"/>
</dbReference>
<accession>P86322</accession>
<keyword id="KW-0903">Direct protein sequencing</keyword>
<keyword id="KW-0249">Electron transport</keyword>
<keyword id="KW-0349">Heme</keyword>
<keyword id="KW-0408">Iron</keyword>
<keyword id="KW-0479">Metal-binding</keyword>
<keyword id="KW-0574">Periplasm</keyword>
<keyword id="KW-0602">Photosynthesis</keyword>
<keyword id="KW-0873">Pyrrolidone carboxylic acid</keyword>
<keyword id="KW-0813">Transport</keyword>
<feature type="chain" id="PRO_0000380711" description="Cytochrome c2">
    <location>
        <begin position="1"/>
        <end position="107"/>
    </location>
</feature>
<feature type="binding site" description="covalent" evidence="1 4">
    <location>
        <position position="13"/>
    </location>
    <ligand>
        <name>heme c</name>
        <dbReference type="ChEBI" id="CHEBI:61717"/>
    </ligand>
</feature>
<feature type="binding site" description="covalent" evidence="1 4">
    <location>
        <position position="16"/>
    </location>
    <ligand>
        <name>heme c</name>
        <dbReference type="ChEBI" id="CHEBI:61717"/>
    </ligand>
</feature>
<feature type="binding site" description="axial binding residue" evidence="1 4">
    <location>
        <position position="17"/>
    </location>
    <ligand>
        <name>heme c</name>
        <dbReference type="ChEBI" id="CHEBI:61717"/>
    </ligand>
    <ligandPart>
        <name>Fe</name>
        <dbReference type="ChEBI" id="CHEBI:18248"/>
    </ligandPart>
</feature>
<feature type="binding site" description="axial binding residue" evidence="1 4">
    <location>
        <position position="79"/>
    </location>
    <ligand>
        <name>heme c</name>
        <dbReference type="ChEBI" id="CHEBI:61717"/>
    </ligand>
    <ligandPart>
        <name>Fe</name>
        <dbReference type="ChEBI" id="CHEBI:18248"/>
    </ligandPart>
</feature>
<feature type="modified residue" description="Pyrrolidone carboxylic acid" evidence="2">
    <location>
        <position position="1"/>
    </location>
</feature>
<evidence type="ECO:0000250" key="1">
    <source>
        <dbReference type="UniProtKB" id="P00083"/>
    </source>
</evidence>
<evidence type="ECO:0000250" key="2">
    <source>
        <dbReference type="UniProtKB" id="P0C0X8"/>
    </source>
</evidence>
<evidence type="ECO:0000255" key="3"/>
<evidence type="ECO:0000255" key="4">
    <source>
        <dbReference type="PROSITE-ProRule" id="PRU00433"/>
    </source>
</evidence>
<evidence type="ECO:0000269" key="5">
    <source>
    </source>
</evidence>
<evidence type="ECO:0000305" key="6"/>
<comment type="function">
    <text evidence="6">Cytochrome c2 is found mainly in purple, non-sulfur, photosynthetic bacteria where it functions as the electron donor to the oxidized bacteriochlorophyll in the photophosphorylation pathway. However, it may also have a role in the respiratory chain and is found in some non-photosynthetic bacteria.</text>
</comment>
<comment type="subcellular location">
    <subcellularLocation>
        <location evidence="5">Periplasm</location>
    </subcellularLocation>
</comment>
<comment type="PTM">
    <text evidence="1">Binds 1 heme c group covalently per subunit.</text>
</comment>
<comment type="similarity">
    <text evidence="3">Belongs to the cytochrome c family.</text>
</comment>
<sequence length="107" mass="11435">QDVEAGAVSFRKCAPCHAVGEGAANKVGPVLNGLPGRKSGTIAGFNYSDANKNSGITWDKATFKTYITDPRAKIPGTKMVFAGIKNDKEQDDLWAYLSQFGPDGKKK</sequence>
<organism>
    <name type="scientific">Rhodoplanes tepidamans</name>
    <name type="common">Rhodoplanes cryptolactis</name>
    <dbReference type="NCBI Taxonomy" id="200616"/>
    <lineage>
        <taxon>Bacteria</taxon>
        <taxon>Pseudomonadati</taxon>
        <taxon>Pseudomonadota</taxon>
        <taxon>Alphaproteobacteria</taxon>
        <taxon>Hyphomicrobiales</taxon>
        <taxon>Hyphomicrobiaceae</taxon>
        <taxon>Rhodoplanes</taxon>
    </lineage>
</organism>